<name>RSMH_ECODH</name>
<reference key="1">
    <citation type="journal article" date="2008" name="J. Bacteriol.">
        <title>The complete genome sequence of Escherichia coli DH10B: insights into the biology of a laboratory workhorse.</title>
        <authorList>
            <person name="Durfee T."/>
            <person name="Nelson R."/>
            <person name="Baldwin S."/>
            <person name="Plunkett G. III"/>
            <person name="Burland V."/>
            <person name="Mau B."/>
            <person name="Petrosino J.F."/>
            <person name="Qin X."/>
            <person name="Muzny D.M."/>
            <person name="Ayele M."/>
            <person name="Gibbs R.A."/>
            <person name="Csorgo B."/>
            <person name="Posfai G."/>
            <person name="Weinstock G.M."/>
            <person name="Blattner F.R."/>
        </authorList>
    </citation>
    <scope>NUCLEOTIDE SEQUENCE [LARGE SCALE GENOMIC DNA]</scope>
    <source>
        <strain>K12 / DH10B</strain>
    </source>
</reference>
<keyword id="KW-0963">Cytoplasm</keyword>
<keyword id="KW-0489">Methyltransferase</keyword>
<keyword id="KW-0698">rRNA processing</keyword>
<keyword id="KW-0949">S-adenosyl-L-methionine</keyword>
<keyword id="KW-0808">Transferase</keyword>
<dbReference type="EC" id="2.1.1.199" evidence="1"/>
<dbReference type="EMBL" id="CP000948">
    <property type="protein sequence ID" value="ACB01263.1"/>
    <property type="molecule type" value="Genomic_DNA"/>
</dbReference>
<dbReference type="RefSeq" id="WP_000970479.1">
    <property type="nucleotide sequence ID" value="NC_010473.1"/>
</dbReference>
<dbReference type="SMR" id="B1XC59"/>
<dbReference type="GeneID" id="86862592"/>
<dbReference type="KEGG" id="ecd:ECDH10B_0064"/>
<dbReference type="HOGENOM" id="CLU_038422_2_0_6"/>
<dbReference type="GO" id="GO:0005737">
    <property type="term" value="C:cytoplasm"/>
    <property type="evidence" value="ECO:0007669"/>
    <property type="project" value="UniProtKB-SubCell"/>
</dbReference>
<dbReference type="GO" id="GO:0071424">
    <property type="term" value="F:rRNA (cytosine-N4-)-methyltransferase activity"/>
    <property type="evidence" value="ECO:0007669"/>
    <property type="project" value="UniProtKB-UniRule"/>
</dbReference>
<dbReference type="GO" id="GO:0070475">
    <property type="term" value="P:rRNA base methylation"/>
    <property type="evidence" value="ECO:0007669"/>
    <property type="project" value="UniProtKB-UniRule"/>
</dbReference>
<dbReference type="FunFam" id="1.10.150.170:FF:000001">
    <property type="entry name" value="Ribosomal RNA small subunit methyltransferase H"/>
    <property type="match status" value="1"/>
</dbReference>
<dbReference type="Gene3D" id="1.10.150.170">
    <property type="entry name" value="Putative methyltransferase TM0872, insert domain"/>
    <property type="match status" value="1"/>
</dbReference>
<dbReference type="Gene3D" id="3.40.50.150">
    <property type="entry name" value="Vaccinia Virus protein VP39"/>
    <property type="match status" value="1"/>
</dbReference>
<dbReference type="HAMAP" id="MF_01007">
    <property type="entry name" value="16SrRNA_methyltr_H"/>
    <property type="match status" value="1"/>
</dbReference>
<dbReference type="InterPro" id="IPR002903">
    <property type="entry name" value="RsmH"/>
</dbReference>
<dbReference type="InterPro" id="IPR023397">
    <property type="entry name" value="SAM-dep_MeTrfase_MraW_recog"/>
</dbReference>
<dbReference type="InterPro" id="IPR029063">
    <property type="entry name" value="SAM-dependent_MTases_sf"/>
</dbReference>
<dbReference type="NCBIfam" id="TIGR00006">
    <property type="entry name" value="16S rRNA (cytosine(1402)-N(4))-methyltransferase RsmH"/>
    <property type="match status" value="1"/>
</dbReference>
<dbReference type="PANTHER" id="PTHR11265:SF0">
    <property type="entry name" value="12S RRNA N4-METHYLCYTIDINE METHYLTRANSFERASE"/>
    <property type="match status" value="1"/>
</dbReference>
<dbReference type="PANTHER" id="PTHR11265">
    <property type="entry name" value="S-ADENOSYL-METHYLTRANSFERASE MRAW"/>
    <property type="match status" value="1"/>
</dbReference>
<dbReference type="Pfam" id="PF01795">
    <property type="entry name" value="Methyltransf_5"/>
    <property type="match status" value="1"/>
</dbReference>
<dbReference type="PIRSF" id="PIRSF004486">
    <property type="entry name" value="MraW"/>
    <property type="match status" value="1"/>
</dbReference>
<dbReference type="SUPFAM" id="SSF81799">
    <property type="entry name" value="Putative methyltransferase TM0872, insert domain"/>
    <property type="match status" value="1"/>
</dbReference>
<dbReference type="SUPFAM" id="SSF53335">
    <property type="entry name" value="S-adenosyl-L-methionine-dependent methyltransferases"/>
    <property type="match status" value="1"/>
</dbReference>
<proteinExistence type="inferred from homology"/>
<organism>
    <name type="scientific">Escherichia coli (strain K12 / DH10B)</name>
    <dbReference type="NCBI Taxonomy" id="316385"/>
    <lineage>
        <taxon>Bacteria</taxon>
        <taxon>Pseudomonadati</taxon>
        <taxon>Pseudomonadota</taxon>
        <taxon>Gammaproteobacteria</taxon>
        <taxon>Enterobacterales</taxon>
        <taxon>Enterobacteriaceae</taxon>
        <taxon>Escherichia</taxon>
    </lineage>
</organism>
<protein>
    <recommendedName>
        <fullName evidence="1">Ribosomal RNA small subunit methyltransferase H</fullName>
        <ecNumber evidence="1">2.1.1.199</ecNumber>
    </recommendedName>
    <alternativeName>
        <fullName evidence="1">16S rRNA m(4)C1402 methyltransferase</fullName>
    </alternativeName>
    <alternativeName>
        <fullName evidence="1">rRNA (cytosine-N(4)-)-methyltransferase RsmH</fullName>
    </alternativeName>
</protein>
<accession>B1XC59</accession>
<sequence length="313" mass="34878">MMENYKHTTVLLDEAVNGLNIRPDGIYIDGTFGRGGHSRLILSQLGEEGRLLAIDRDPQAIAVAKTIDDPRFSIIHGPFSALGEYVAERDLIGKIDGILLDLGVSSPQLDDAERGFSFMRDGPLDMRMDPTRGQSAAEWLQTAEEADIAWVLKTYGEERFAKRIARAIVERNREQPMTRTKELAEVVAAATPVKDKFKHPATRTFQAVRIWVNSELEEIEQALKSSLNVLAPGGRLSIISFHSLEDRIVKRFMRENSRGPQVPAGLPMTEEQLKKLGGRQLRALGKLMPGEEEVAENPRARSSVLRIAERTNA</sequence>
<gene>
    <name evidence="1" type="primary">rsmH</name>
    <name type="synonym">mraW</name>
    <name type="ordered locus">ECDH10B_0064</name>
</gene>
<feature type="chain" id="PRO_0000386872" description="Ribosomal RNA small subunit methyltransferase H">
    <location>
        <begin position="1"/>
        <end position="313"/>
    </location>
</feature>
<feature type="binding site" evidence="1">
    <location>
        <begin position="35"/>
        <end position="37"/>
    </location>
    <ligand>
        <name>S-adenosyl-L-methionine</name>
        <dbReference type="ChEBI" id="CHEBI:59789"/>
    </ligand>
</feature>
<feature type="binding site" evidence="1">
    <location>
        <position position="55"/>
    </location>
    <ligand>
        <name>S-adenosyl-L-methionine</name>
        <dbReference type="ChEBI" id="CHEBI:59789"/>
    </ligand>
</feature>
<feature type="binding site" evidence="1">
    <location>
        <position position="79"/>
    </location>
    <ligand>
        <name>S-adenosyl-L-methionine</name>
        <dbReference type="ChEBI" id="CHEBI:59789"/>
    </ligand>
</feature>
<feature type="binding site" evidence="1">
    <location>
        <position position="101"/>
    </location>
    <ligand>
        <name>S-adenosyl-L-methionine</name>
        <dbReference type="ChEBI" id="CHEBI:59789"/>
    </ligand>
</feature>
<feature type="binding site" evidence="1">
    <location>
        <position position="108"/>
    </location>
    <ligand>
        <name>S-adenosyl-L-methionine</name>
        <dbReference type="ChEBI" id="CHEBI:59789"/>
    </ligand>
</feature>
<evidence type="ECO:0000255" key="1">
    <source>
        <dbReference type="HAMAP-Rule" id="MF_01007"/>
    </source>
</evidence>
<comment type="function">
    <text evidence="1">Specifically methylates the N4 position of cytidine in position 1402 (C1402) of 16S rRNA.</text>
</comment>
<comment type="catalytic activity">
    <reaction evidence="1">
        <text>cytidine(1402) in 16S rRNA + S-adenosyl-L-methionine = N(4)-methylcytidine(1402) in 16S rRNA + S-adenosyl-L-homocysteine + H(+)</text>
        <dbReference type="Rhea" id="RHEA:42928"/>
        <dbReference type="Rhea" id="RHEA-COMP:10286"/>
        <dbReference type="Rhea" id="RHEA-COMP:10287"/>
        <dbReference type="ChEBI" id="CHEBI:15378"/>
        <dbReference type="ChEBI" id="CHEBI:57856"/>
        <dbReference type="ChEBI" id="CHEBI:59789"/>
        <dbReference type="ChEBI" id="CHEBI:74506"/>
        <dbReference type="ChEBI" id="CHEBI:82748"/>
        <dbReference type="EC" id="2.1.1.199"/>
    </reaction>
</comment>
<comment type="subcellular location">
    <subcellularLocation>
        <location evidence="1">Cytoplasm</location>
    </subcellularLocation>
</comment>
<comment type="similarity">
    <text evidence="1">Belongs to the methyltransferase superfamily. RsmH family.</text>
</comment>